<evidence type="ECO:0000255" key="1">
    <source>
        <dbReference type="HAMAP-Rule" id="MF_01398"/>
    </source>
</evidence>
<feature type="chain" id="PRO_0000368832" description="ATP synthase subunit b">
    <location>
        <begin position="1"/>
        <end position="171"/>
    </location>
</feature>
<feature type="transmembrane region" description="Helical" evidence="1">
    <location>
        <begin position="24"/>
        <end position="44"/>
    </location>
</feature>
<organism>
    <name type="scientific">Synechococcus sp. (strain WH7803)</name>
    <dbReference type="NCBI Taxonomy" id="32051"/>
    <lineage>
        <taxon>Bacteria</taxon>
        <taxon>Bacillati</taxon>
        <taxon>Cyanobacteriota</taxon>
        <taxon>Cyanophyceae</taxon>
        <taxon>Synechococcales</taxon>
        <taxon>Synechococcaceae</taxon>
        <taxon>Synechococcus</taxon>
    </lineage>
</organism>
<gene>
    <name evidence="1" type="primary">atpF</name>
    <name type="ordered locus">SynWH7803_2019</name>
</gene>
<accession>A5GND0</accession>
<protein>
    <recommendedName>
        <fullName evidence="1">ATP synthase subunit b</fullName>
    </recommendedName>
    <alternativeName>
        <fullName evidence="1">ATP synthase F(0) sector subunit b</fullName>
    </alternativeName>
    <alternativeName>
        <fullName evidence="1">ATPase subunit I</fullName>
    </alternativeName>
    <alternativeName>
        <fullName evidence="1">F-type ATPase subunit b</fullName>
        <shortName evidence="1">F-ATPase subunit b</shortName>
    </alternativeName>
</protein>
<name>ATPF_SYNPW</name>
<proteinExistence type="inferred from homology"/>
<comment type="function">
    <text evidence="1">F(1)F(0) ATP synthase produces ATP from ADP in the presence of a proton or sodium gradient. F-type ATPases consist of two structural domains, F(1) containing the extramembraneous catalytic core and F(0) containing the membrane proton channel, linked together by a central stalk and a peripheral stalk. During catalysis, ATP synthesis in the catalytic domain of F(1) is coupled via a rotary mechanism of the central stalk subunits to proton translocation.</text>
</comment>
<comment type="function">
    <text evidence="1">Component of the F(0) channel, it forms part of the peripheral stalk, linking F(1) to F(0).</text>
</comment>
<comment type="subunit">
    <text evidence="1">F-type ATPases have 2 components, F(1) - the catalytic core - and F(0) - the membrane proton channel. F(1) has five subunits: alpha(3), beta(3), gamma(1), delta(1), epsilon(1). F(0) has four main subunits: a(1), b(1), b'(1) and c(10-14). The alpha and beta chains form an alternating ring which encloses part of the gamma chain. F(1) is attached to F(0) by a central stalk formed by the gamma and epsilon chains, while a peripheral stalk is formed by the delta, b and b' chains.</text>
</comment>
<comment type="subcellular location">
    <subcellularLocation>
        <location evidence="1">Cellular thylakoid membrane</location>
        <topology evidence="1">Single-pass membrane protein</topology>
    </subcellularLocation>
</comment>
<comment type="similarity">
    <text evidence="1">Belongs to the ATPase B chain family.</text>
</comment>
<sequence>MPLPLFASEGGFGLNLNLFETNLINLVIVIGVLYWFLKGFLGGILERRRQAILKDLEDSEGRLRQATTDLARAQEDLAAAQQKAEKIRSDGKARAEAIRKDGEMRTINAMAAVKQDALADLNAEGARLTEQLRREAALAAIDKVMTELPGRLDQAGQSRLIDASISNLEDA</sequence>
<keyword id="KW-0066">ATP synthesis</keyword>
<keyword id="KW-0138">CF(0)</keyword>
<keyword id="KW-0375">Hydrogen ion transport</keyword>
<keyword id="KW-0406">Ion transport</keyword>
<keyword id="KW-0472">Membrane</keyword>
<keyword id="KW-1185">Reference proteome</keyword>
<keyword id="KW-0793">Thylakoid</keyword>
<keyword id="KW-0812">Transmembrane</keyword>
<keyword id="KW-1133">Transmembrane helix</keyword>
<keyword id="KW-0813">Transport</keyword>
<dbReference type="EMBL" id="CT971583">
    <property type="protein sequence ID" value="CAK24445.1"/>
    <property type="molecule type" value="Genomic_DNA"/>
</dbReference>
<dbReference type="SMR" id="A5GND0"/>
<dbReference type="STRING" id="32051.SynWH7803_2019"/>
<dbReference type="KEGG" id="syx:SynWH7803_2019"/>
<dbReference type="eggNOG" id="COG0711">
    <property type="taxonomic scope" value="Bacteria"/>
</dbReference>
<dbReference type="HOGENOM" id="CLU_079215_8_1_3"/>
<dbReference type="Proteomes" id="UP000001566">
    <property type="component" value="Chromosome"/>
</dbReference>
<dbReference type="GO" id="GO:0031676">
    <property type="term" value="C:plasma membrane-derived thylakoid membrane"/>
    <property type="evidence" value="ECO:0007669"/>
    <property type="project" value="UniProtKB-SubCell"/>
</dbReference>
<dbReference type="GO" id="GO:0045259">
    <property type="term" value="C:proton-transporting ATP synthase complex"/>
    <property type="evidence" value="ECO:0007669"/>
    <property type="project" value="UniProtKB-KW"/>
</dbReference>
<dbReference type="GO" id="GO:0046933">
    <property type="term" value="F:proton-transporting ATP synthase activity, rotational mechanism"/>
    <property type="evidence" value="ECO:0007669"/>
    <property type="project" value="UniProtKB-UniRule"/>
</dbReference>
<dbReference type="CDD" id="cd06503">
    <property type="entry name" value="ATP-synt_Fo_b"/>
    <property type="match status" value="1"/>
</dbReference>
<dbReference type="HAMAP" id="MF_01398">
    <property type="entry name" value="ATP_synth_b_bprime"/>
    <property type="match status" value="1"/>
</dbReference>
<dbReference type="InterPro" id="IPR002146">
    <property type="entry name" value="ATP_synth_b/b'su_bac/chlpt"/>
</dbReference>
<dbReference type="NCBIfam" id="NF005606">
    <property type="entry name" value="PRK07352.1"/>
    <property type="match status" value="1"/>
</dbReference>
<dbReference type="PANTHER" id="PTHR34264">
    <property type="entry name" value="ATP SYNTHASE SUBUNIT B, CHLOROPLASTIC"/>
    <property type="match status" value="1"/>
</dbReference>
<dbReference type="PANTHER" id="PTHR34264:SF3">
    <property type="entry name" value="ATP SYNTHASE SUBUNIT B, CHLOROPLASTIC"/>
    <property type="match status" value="1"/>
</dbReference>
<dbReference type="Pfam" id="PF00430">
    <property type="entry name" value="ATP-synt_B"/>
    <property type="match status" value="1"/>
</dbReference>
<reference key="1">
    <citation type="submission" date="2006-05" db="EMBL/GenBank/DDBJ databases">
        <authorList>
            <consortium name="Genoscope"/>
        </authorList>
    </citation>
    <scope>NUCLEOTIDE SEQUENCE [LARGE SCALE GENOMIC DNA]</scope>
    <source>
        <strain>WH7803</strain>
    </source>
</reference>